<name>BRNP1_HUMAN</name>
<organism>
    <name type="scientific">Homo sapiens</name>
    <name type="common">Human</name>
    <dbReference type="NCBI Taxonomy" id="9606"/>
    <lineage>
        <taxon>Eukaryota</taxon>
        <taxon>Metazoa</taxon>
        <taxon>Chordata</taxon>
        <taxon>Craniata</taxon>
        <taxon>Vertebrata</taxon>
        <taxon>Euteleostomi</taxon>
        <taxon>Mammalia</taxon>
        <taxon>Eutheria</taxon>
        <taxon>Euarchontoglires</taxon>
        <taxon>Primates</taxon>
        <taxon>Haplorrhini</taxon>
        <taxon>Catarrhini</taxon>
        <taxon>Hominidae</taxon>
        <taxon>Homo</taxon>
    </lineage>
</organism>
<feature type="signal peptide" evidence="2">
    <location>
        <begin position="1"/>
        <end position="19"/>
    </location>
</feature>
<feature type="chain" id="PRO_0000045766" description="BMP/retinoic acid-inducible neural-specific protein 1">
    <location>
        <begin position="20"/>
        <end position="761"/>
    </location>
</feature>
<feature type="domain" description="MACPF">
    <location>
        <begin position="68"/>
        <end position="251"/>
    </location>
</feature>
<feature type="glycosylation site" description="N-linked (GlcNAc...) asparagine" evidence="2">
    <location>
        <position position="156"/>
    </location>
</feature>
<feature type="glycosylation site" description="N-linked (GlcNAc...) asparagine" evidence="2">
    <location>
        <position position="433"/>
    </location>
</feature>
<feature type="glycosylation site" description="N-linked (GlcNAc...) asparagine" evidence="2">
    <location>
        <position position="443"/>
    </location>
</feature>
<feature type="glycosylation site" description="N-linked (GlcNAc...) asparagine" evidence="2">
    <location>
        <position position="553"/>
    </location>
</feature>
<feature type="glycosylation site" description="N-linked (GlcNAc...) asparagine" evidence="2">
    <location>
        <position position="599"/>
    </location>
</feature>
<feature type="glycosylation site" description="N-linked (GlcNAc...) asparagine" evidence="2">
    <location>
        <position position="631"/>
    </location>
</feature>
<feature type="glycosylation site" description="N-linked (GlcNAc...) asparagine" evidence="2">
    <location>
        <position position="677"/>
    </location>
</feature>
<feature type="splice variant" id="VSP_017021" description="In isoform 3." evidence="7">
    <location>
        <begin position="1"/>
        <end position="285"/>
    </location>
</feature>
<feature type="splice variant" id="VSP_017022" description="In isoform 2." evidence="7">
    <original>DEFKSFMKRLPSN</original>
    <variation>GRESHSVPLHEWP</variation>
    <location>
        <begin position="308"/>
        <end position="320"/>
    </location>
</feature>
<feature type="splice variant" id="VSP_017023" description="In isoform 2." evidence="7">
    <location>
        <begin position="321"/>
        <end position="761"/>
    </location>
</feature>
<feature type="sequence variant" id="VAR_029989" description="In dbSNP:rs2118871480." evidence="3">
    <original>S</original>
    <variation>R</variation>
    <location>
        <position position="347"/>
    </location>
</feature>
<feature type="sequence variant" id="VAR_029990" description="In dbSNP:rs17476783." evidence="3">
    <original>R</original>
    <variation>H</variation>
    <location>
        <position position="358"/>
    </location>
</feature>
<feature type="sequence variant" id="VAR_024930" description="In dbSNP:rs1043377." evidence="3 6">
    <original>A</original>
    <variation>T</variation>
    <location>
        <position position="437"/>
    </location>
</feature>
<feature type="sequence variant" id="VAR_036336" description="In a colorectal cancer sample; somatic mutation." evidence="5">
    <original>P</original>
    <variation>T</variation>
    <location>
        <position position="712"/>
    </location>
</feature>
<proteinExistence type="evidence at protein level"/>
<protein>
    <recommendedName>
        <fullName>BMP/retinoic acid-inducible neural-specific protein 1</fullName>
    </recommendedName>
    <alternativeName>
        <fullName>Deleted in bladder cancer protein 1</fullName>
    </alternativeName>
</protein>
<gene>
    <name type="primary">BRINP1</name>
    <name type="synonym">DBC1</name>
    <name type="synonym">DBCCR1</name>
    <name type="synonym">FAM5A</name>
    <name type="ORF">IB3089A</name>
</gene>
<evidence type="ECO:0000250" key="1">
    <source>
        <dbReference type="UniProtKB" id="Q920P3"/>
    </source>
</evidence>
<evidence type="ECO:0000255" key="2"/>
<evidence type="ECO:0000269" key="3">
    <source>
    </source>
</evidence>
<evidence type="ECO:0000269" key="4">
    <source>
    </source>
</evidence>
<evidence type="ECO:0000269" key="5">
    <source>
    </source>
</evidence>
<evidence type="ECO:0000269" key="6">
    <source>
    </source>
</evidence>
<evidence type="ECO:0000303" key="7">
    <source>
    </source>
</evidence>
<evidence type="ECO:0000305" key="8"/>
<reference key="1">
    <citation type="journal article" date="1998" name="Genomics">
        <title>Structure and methylation-based silencing of a gene (DBCCR1) within a candidate bladder cancer tumor suppressor region at 9q32-q33.</title>
        <authorList>
            <person name="Habuchi T."/>
            <person name="Luscombe M."/>
            <person name="Elder P.A."/>
            <person name="Knowles M.A."/>
        </authorList>
    </citation>
    <scope>NUCLEOTIDE SEQUENCE [MRNA] (ISOFORM 1)</scope>
    <scope>VARIANT THR-437</scope>
    <scope>TISSUE SPECIFICITY</scope>
    <source>
        <tissue>Brain</tissue>
    </source>
</reference>
<reference key="2">
    <citation type="journal article" date="2004" name="Nature">
        <title>DNA sequence and analysis of human chromosome 9.</title>
        <authorList>
            <person name="Humphray S.J."/>
            <person name="Oliver K."/>
            <person name="Hunt A.R."/>
            <person name="Plumb R.W."/>
            <person name="Loveland J.E."/>
            <person name="Howe K.L."/>
            <person name="Andrews T.D."/>
            <person name="Searle S."/>
            <person name="Hunt S.E."/>
            <person name="Scott C.E."/>
            <person name="Jones M.C."/>
            <person name="Ainscough R."/>
            <person name="Almeida J.P."/>
            <person name="Ambrose K.D."/>
            <person name="Ashwell R.I.S."/>
            <person name="Babbage A.K."/>
            <person name="Babbage S."/>
            <person name="Bagguley C.L."/>
            <person name="Bailey J."/>
            <person name="Banerjee R."/>
            <person name="Barker D.J."/>
            <person name="Barlow K.F."/>
            <person name="Bates K."/>
            <person name="Beasley H."/>
            <person name="Beasley O."/>
            <person name="Bird C.P."/>
            <person name="Bray-Allen S."/>
            <person name="Brown A.J."/>
            <person name="Brown J.Y."/>
            <person name="Burford D."/>
            <person name="Burrill W."/>
            <person name="Burton J."/>
            <person name="Carder C."/>
            <person name="Carter N.P."/>
            <person name="Chapman J.C."/>
            <person name="Chen Y."/>
            <person name="Clarke G."/>
            <person name="Clark S.Y."/>
            <person name="Clee C.M."/>
            <person name="Clegg S."/>
            <person name="Collier R.E."/>
            <person name="Corby N."/>
            <person name="Crosier M."/>
            <person name="Cummings A.T."/>
            <person name="Davies J."/>
            <person name="Dhami P."/>
            <person name="Dunn M."/>
            <person name="Dutta I."/>
            <person name="Dyer L.W."/>
            <person name="Earthrowl M.E."/>
            <person name="Faulkner L."/>
            <person name="Fleming C.J."/>
            <person name="Frankish A."/>
            <person name="Frankland J.A."/>
            <person name="French L."/>
            <person name="Fricker D.G."/>
            <person name="Garner P."/>
            <person name="Garnett J."/>
            <person name="Ghori J."/>
            <person name="Gilbert J.G.R."/>
            <person name="Glison C."/>
            <person name="Grafham D.V."/>
            <person name="Gribble S."/>
            <person name="Griffiths C."/>
            <person name="Griffiths-Jones S."/>
            <person name="Grocock R."/>
            <person name="Guy J."/>
            <person name="Hall R.E."/>
            <person name="Hammond S."/>
            <person name="Harley J.L."/>
            <person name="Harrison E.S.I."/>
            <person name="Hart E.A."/>
            <person name="Heath P.D."/>
            <person name="Henderson C.D."/>
            <person name="Hopkins B.L."/>
            <person name="Howard P.J."/>
            <person name="Howden P.J."/>
            <person name="Huckle E."/>
            <person name="Johnson C."/>
            <person name="Johnson D."/>
            <person name="Joy A.A."/>
            <person name="Kay M."/>
            <person name="Keenan S."/>
            <person name="Kershaw J.K."/>
            <person name="Kimberley A.M."/>
            <person name="King A."/>
            <person name="Knights A."/>
            <person name="Laird G.K."/>
            <person name="Langford C."/>
            <person name="Lawlor S."/>
            <person name="Leongamornlert D.A."/>
            <person name="Leversha M."/>
            <person name="Lloyd C."/>
            <person name="Lloyd D.M."/>
            <person name="Lovell J."/>
            <person name="Martin S."/>
            <person name="Mashreghi-Mohammadi M."/>
            <person name="Matthews L."/>
            <person name="McLaren S."/>
            <person name="McLay K.E."/>
            <person name="McMurray A."/>
            <person name="Milne S."/>
            <person name="Nickerson T."/>
            <person name="Nisbett J."/>
            <person name="Nordsiek G."/>
            <person name="Pearce A.V."/>
            <person name="Peck A.I."/>
            <person name="Porter K.M."/>
            <person name="Pandian R."/>
            <person name="Pelan S."/>
            <person name="Phillimore B."/>
            <person name="Povey S."/>
            <person name="Ramsey Y."/>
            <person name="Rand V."/>
            <person name="Scharfe M."/>
            <person name="Sehra H.K."/>
            <person name="Shownkeen R."/>
            <person name="Sims S.K."/>
            <person name="Skuce C.D."/>
            <person name="Smith M."/>
            <person name="Steward C.A."/>
            <person name="Swarbreck D."/>
            <person name="Sycamore N."/>
            <person name="Tester J."/>
            <person name="Thorpe A."/>
            <person name="Tracey A."/>
            <person name="Tromans A."/>
            <person name="Thomas D.W."/>
            <person name="Wall M."/>
            <person name="Wallis J.M."/>
            <person name="West A.P."/>
            <person name="Whitehead S.L."/>
            <person name="Willey D.L."/>
            <person name="Williams S.A."/>
            <person name="Wilming L."/>
            <person name="Wray P.W."/>
            <person name="Young L."/>
            <person name="Ashurst J.L."/>
            <person name="Coulson A."/>
            <person name="Blocker H."/>
            <person name="Durbin R.M."/>
            <person name="Sulston J.E."/>
            <person name="Hubbard T."/>
            <person name="Jackson M.J."/>
            <person name="Bentley D.R."/>
            <person name="Beck S."/>
            <person name="Rogers J."/>
            <person name="Dunham I."/>
        </authorList>
    </citation>
    <scope>NUCLEOTIDE SEQUENCE [LARGE SCALE GENOMIC DNA]</scope>
</reference>
<reference key="3">
    <citation type="journal article" date="2004" name="Genome Res.">
        <title>The status, quality, and expansion of the NIH full-length cDNA project: the Mammalian Gene Collection (MGC).</title>
        <authorList>
            <consortium name="The MGC Project Team"/>
        </authorList>
    </citation>
    <scope>NUCLEOTIDE SEQUENCE [LARGE SCALE MRNA] (ISOFORMS 1; 2 AND 3)</scope>
    <source>
        <tissue>Brain</tissue>
        <tissue>Kidney</tissue>
    </source>
</reference>
<reference key="4">
    <citation type="journal article" date="2001" name="Oncogene">
        <title>Negative regulation of G(1)/S transition by the candidate bladder tumour suppressor gene DBCCR1.</title>
        <authorList>
            <person name="Nishiyama H."/>
            <person name="Gill J.H."/>
            <person name="Pitt E."/>
            <person name="Kennedy W."/>
            <person name="Knowles M.A."/>
        </authorList>
    </citation>
    <scope>FUNCTION</scope>
    <scope>SUBCELLULAR LOCATION</scope>
    <scope>VARIANTS ARG-347; HIS-358 AND THR-437</scope>
</reference>
<reference key="5">
    <citation type="journal article" date="2004" name="Oncogene">
        <title>DBCCR1 mediates death in cultured bladder tumor cells.</title>
        <authorList>
            <person name="Wright K.O."/>
            <person name="Messing E.M."/>
            <person name="Reeder J.E."/>
        </authorList>
    </citation>
    <scope>SUBCELLULAR LOCATION</scope>
</reference>
<reference key="6">
    <citation type="journal article" date="2006" name="Science">
        <title>The consensus coding sequences of human breast and colorectal cancers.</title>
        <authorList>
            <person name="Sjoeblom T."/>
            <person name="Jones S."/>
            <person name="Wood L.D."/>
            <person name="Parsons D.W."/>
            <person name="Lin J."/>
            <person name="Barber T.D."/>
            <person name="Mandelker D."/>
            <person name="Leary R.J."/>
            <person name="Ptak J."/>
            <person name="Silliman N."/>
            <person name="Szabo S."/>
            <person name="Buckhaults P."/>
            <person name="Farrell C."/>
            <person name="Meeh P."/>
            <person name="Markowitz S.D."/>
            <person name="Willis J."/>
            <person name="Dawson D."/>
            <person name="Willson J.K.V."/>
            <person name="Gazdar A.F."/>
            <person name="Hartigan J."/>
            <person name="Wu L."/>
            <person name="Liu C."/>
            <person name="Parmigiani G."/>
            <person name="Park B.H."/>
            <person name="Bachman K.E."/>
            <person name="Papadopoulos N."/>
            <person name="Vogelstein B."/>
            <person name="Kinzler K.W."/>
            <person name="Velculescu V.E."/>
        </authorList>
    </citation>
    <scope>VARIANT [LARGE SCALE ANALYSIS] THR-712</scope>
</reference>
<keyword id="KW-0025">Alternative splicing</keyword>
<keyword id="KW-0131">Cell cycle</keyword>
<keyword id="KW-0963">Cytoplasm</keyword>
<keyword id="KW-0325">Glycoprotein</keyword>
<keyword id="KW-0338">Growth arrest</keyword>
<keyword id="KW-0524">Neurogenesis</keyword>
<keyword id="KW-1267">Proteomics identification</keyword>
<keyword id="KW-1185">Reference proteome</keyword>
<keyword id="KW-0732">Signal</keyword>
<accession>O60477</accession>
<accession>Q6IPV6</accession>
<accession>Q6P1A0</accession>
<accession>Q8WU22</accession>
<comment type="function">
    <text evidence="1 3">Plays a role in neurogenesis and brain development (By similarity). May suppress cell cycle progression in postmitotic neurons by inhibiting G1/S transition (PubMed:11420708).</text>
</comment>
<comment type="interaction">
    <interactant intactId="EBI-3904864">
        <id>O60477</id>
    </interactant>
    <interactant intactId="EBI-2560158">
        <id>Q5BKZ1</id>
        <label>ZNF326</label>
    </interactant>
    <organismsDiffer>false</organismsDiffer>
    <experiments>5</experiments>
</comment>
<comment type="subcellular location">
    <subcellularLocation>
        <location evidence="3 4">Cytoplasm</location>
    </subcellularLocation>
</comment>
<comment type="alternative products">
    <event type="alternative splicing"/>
    <isoform>
        <id>O60477-1</id>
        <name>1</name>
        <sequence type="displayed"/>
    </isoform>
    <isoform>
        <id>O60477-2</id>
        <name>2</name>
        <sequence type="described" ref="VSP_017022 VSP_017023"/>
    </isoform>
    <isoform>
        <id>O60477-3</id>
        <name>3</name>
        <sequence type="described" ref="VSP_017021"/>
    </isoform>
</comment>
<comment type="tissue specificity">
    <text evidence="6">Highly expressed in brain. Weakly expressed in heart, lung, skeletal muscle, kidney, thymus, prostate, testis and small intestine.</text>
</comment>
<comment type="miscellaneous">
    <text>Silenced by methylation in 50% of bladder cancer cell lines.</text>
</comment>
<comment type="similarity">
    <text evidence="8">Belongs to the BRINP family.</text>
</comment>
<sequence length="761" mass="88760">MNWRFVELLYFLFIWGRISVQPSHQEPAGTDQHVSKEFDWLISDRGPFHHSRSYLSFVERHRQGFTTRYKIYREFARWKVRNTAIERRDLVRHPVPLMPEFQRSIRLLGRRPTTQQFIDTIIKKYGTHLLISATLGGEEALTMYMDKSRLDRKSGNATQSVEALHQLASSYFVDRDGTMRRLHEIQISTGAIKVTETRTGPLGCNSYDNLDSVSSVLLQSTESKLHLQGLQIIFPQYLQEKFVQSALSYIMCNGEGEYLCQNSQCRCQCAEEFPQCNCPITDIQIMEYTLANMAKSWAEAYKDLENSDEFKSFMKRLPSNHFLTIGSIHQHWGNDWDLQNRYKLLQSATEAQRQKIQRTARKLFGLSVRCRHNPNHQLPRERTIQQWLARVQSLLYCNENGFWGTFLESQRSCVCHGSTTLCQRPIPCVIGGNNSCAMCSLANISLCGSCNKGYKLYRGRCEPQNVDSERSEQFISFETDLDFQDLELKYLLQKMDSRLYVHTTFISNEIRLDTFFDPRWRKRMSLTLKSNKNRMDFIHMVIGMSMRICQMRNSSLDPMFFVYVNPFSGSHSEGWNMPFGEFGYPRWEKIRLQNSQCYNWTLLLGNRWKTFFETVHIYLRSRTRLPTLLRNETGQGPVDLSDPSKRQFYIKISDVQVFGYSLRFNADLLRSAVQQVNQSYTQGGQFYSSSSVMLLLLDIRDRINRLAPPVAPGKPQLDLFSCMLKHRLKLTNSEIIRVNHALDLYNTEILKQSDQMTAKLC</sequence>
<dbReference type="EMBL" id="AF027734">
    <property type="protein sequence ID" value="AAC39691.1"/>
    <property type="molecule type" value="mRNA"/>
</dbReference>
<dbReference type="EMBL" id="AL138894">
    <property type="status" value="NOT_ANNOTATED_CDS"/>
    <property type="molecule type" value="Genomic_DNA"/>
</dbReference>
<dbReference type="EMBL" id="AL353773">
    <property type="status" value="NOT_ANNOTATED_CDS"/>
    <property type="molecule type" value="Genomic_DNA"/>
</dbReference>
<dbReference type="EMBL" id="BC021560">
    <property type="protein sequence ID" value="AAH21560.1"/>
    <property type="molecule type" value="mRNA"/>
</dbReference>
<dbReference type="EMBL" id="BC065196">
    <property type="protein sequence ID" value="AAH65196.1"/>
    <property type="molecule type" value="mRNA"/>
</dbReference>
<dbReference type="EMBL" id="BC071702">
    <property type="protein sequence ID" value="AAH71702.1"/>
    <property type="molecule type" value="mRNA"/>
</dbReference>
<dbReference type="CCDS" id="CCDS6822.1">
    <molecule id="O60477-1"/>
</dbReference>
<dbReference type="PIR" id="T09052">
    <property type="entry name" value="T09052"/>
</dbReference>
<dbReference type="RefSeq" id="NP_055433.2">
    <molecule id="O60477-1"/>
    <property type="nucleotide sequence ID" value="NM_014618.3"/>
</dbReference>
<dbReference type="BioGRID" id="107988">
    <property type="interactions" value="41"/>
</dbReference>
<dbReference type="FunCoup" id="O60477">
    <property type="interactions" value="690"/>
</dbReference>
<dbReference type="IntAct" id="O60477">
    <property type="interactions" value="29"/>
</dbReference>
<dbReference type="STRING" id="9606.ENSP00000265922"/>
<dbReference type="TCDB" id="1.C.39.17.1">
    <property type="family name" value="the membrane attack complex/perforin (macpf) family"/>
</dbReference>
<dbReference type="GlyCosmos" id="O60477">
    <property type="glycosylation" value="7 sites, No reported glycans"/>
</dbReference>
<dbReference type="GlyGen" id="O60477">
    <property type="glycosylation" value="9 sites, 1 O-linked glycan (2 sites)"/>
</dbReference>
<dbReference type="iPTMnet" id="O60477"/>
<dbReference type="PhosphoSitePlus" id="O60477"/>
<dbReference type="BioMuta" id="BRINP1"/>
<dbReference type="jPOST" id="O60477"/>
<dbReference type="MassIVE" id="O60477"/>
<dbReference type="PaxDb" id="9606-ENSP00000265922"/>
<dbReference type="PeptideAtlas" id="O60477"/>
<dbReference type="ProteomicsDB" id="49417">
    <molecule id="O60477-1"/>
</dbReference>
<dbReference type="ProteomicsDB" id="49418">
    <molecule id="O60477-2"/>
</dbReference>
<dbReference type="ProteomicsDB" id="49419">
    <molecule id="O60477-3"/>
</dbReference>
<dbReference type="Antibodypedia" id="30047">
    <property type="antibodies" value="220 antibodies from 26 providers"/>
</dbReference>
<dbReference type="DNASU" id="1620"/>
<dbReference type="Ensembl" id="ENST00000265922.8">
    <molecule id="O60477-1"/>
    <property type="protein sequence ID" value="ENSP00000265922.2"/>
    <property type="gene ID" value="ENSG00000078725.13"/>
</dbReference>
<dbReference type="Ensembl" id="ENST00000373964.2">
    <molecule id="O60477-2"/>
    <property type="protein sequence ID" value="ENSP00000363075.1"/>
    <property type="gene ID" value="ENSG00000078725.13"/>
</dbReference>
<dbReference type="GeneID" id="1620"/>
<dbReference type="KEGG" id="hsa:1620"/>
<dbReference type="MANE-Select" id="ENST00000265922.8">
    <property type="protein sequence ID" value="ENSP00000265922.2"/>
    <property type="RefSeq nucleotide sequence ID" value="NM_014618.3"/>
    <property type="RefSeq protein sequence ID" value="NP_055433.2"/>
</dbReference>
<dbReference type="UCSC" id="uc004bkc.3">
    <molecule id="O60477-1"/>
    <property type="organism name" value="human"/>
</dbReference>
<dbReference type="AGR" id="HGNC:2687"/>
<dbReference type="CTD" id="1620"/>
<dbReference type="DisGeNET" id="1620"/>
<dbReference type="GeneCards" id="BRINP1"/>
<dbReference type="HGNC" id="HGNC:2687">
    <property type="gene designation" value="BRINP1"/>
</dbReference>
<dbReference type="HPA" id="ENSG00000078725">
    <property type="expression patterns" value="Tissue enriched (brain)"/>
</dbReference>
<dbReference type="MIM" id="602865">
    <property type="type" value="gene"/>
</dbReference>
<dbReference type="neXtProt" id="NX_O60477"/>
<dbReference type="OpenTargets" id="ENSG00000078725"/>
<dbReference type="PharmGKB" id="PA27156"/>
<dbReference type="VEuPathDB" id="HostDB:ENSG00000078725"/>
<dbReference type="eggNOG" id="ENOG502QT9H">
    <property type="taxonomic scope" value="Eukaryota"/>
</dbReference>
<dbReference type="GeneTree" id="ENSGT00940000158084"/>
<dbReference type="HOGENOM" id="CLU_018347_0_0_1"/>
<dbReference type="InParanoid" id="O60477"/>
<dbReference type="OMA" id="MSESWAS"/>
<dbReference type="OrthoDB" id="8503728at2759"/>
<dbReference type="PAN-GO" id="O60477">
    <property type="GO annotations" value="6 GO annotations based on evolutionary models"/>
</dbReference>
<dbReference type="PhylomeDB" id="O60477"/>
<dbReference type="TreeFam" id="TF331600"/>
<dbReference type="PathwayCommons" id="O60477"/>
<dbReference type="SignaLink" id="O60477"/>
<dbReference type="BioGRID-ORCS" id="1620">
    <property type="hits" value="10 hits in 1128 CRISPR screens"/>
</dbReference>
<dbReference type="ChiTaRS" id="BRINP1">
    <property type="organism name" value="human"/>
</dbReference>
<dbReference type="GeneWiki" id="DBC1"/>
<dbReference type="GenomeRNAi" id="1620"/>
<dbReference type="Pharos" id="O60477">
    <property type="development level" value="Tbio"/>
</dbReference>
<dbReference type="PRO" id="PR:O60477"/>
<dbReference type="Proteomes" id="UP000005640">
    <property type="component" value="Chromosome 9"/>
</dbReference>
<dbReference type="RNAct" id="O60477">
    <property type="molecule type" value="protein"/>
</dbReference>
<dbReference type="Bgee" id="ENSG00000078725">
    <property type="expression patterns" value="Expressed in middle temporal gyrus and 153 other cell types or tissues"/>
</dbReference>
<dbReference type="GO" id="GO:0005737">
    <property type="term" value="C:cytoplasm"/>
    <property type="evidence" value="ECO:0000314"/>
    <property type="project" value="UniProtKB"/>
</dbReference>
<dbReference type="GO" id="GO:0030425">
    <property type="term" value="C:dendrite"/>
    <property type="evidence" value="ECO:0000318"/>
    <property type="project" value="GO_Central"/>
</dbReference>
<dbReference type="GO" id="GO:0098978">
    <property type="term" value="C:glutamatergic synapse"/>
    <property type="evidence" value="ECO:0007669"/>
    <property type="project" value="Ensembl"/>
</dbReference>
<dbReference type="GO" id="GO:0043025">
    <property type="term" value="C:neuronal cell body"/>
    <property type="evidence" value="ECO:0000318"/>
    <property type="project" value="GO_Central"/>
</dbReference>
<dbReference type="GO" id="GO:0001662">
    <property type="term" value="P:behavioral fear response"/>
    <property type="evidence" value="ECO:0007669"/>
    <property type="project" value="Ensembl"/>
</dbReference>
<dbReference type="GO" id="GO:0007420">
    <property type="term" value="P:brain development"/>
    <property type="evidence" value="ECO:0007669"/>
    <property type="project" value="Ensembl"/>
</dbReference>
<dbReference type="GO" id="GO:0008283">
    <property type="term" value="P:cell population proliferation"/>
    <property type="evidence" value="ECO:0007669"/>
    <property type="project" value="Ensembl"/>
</dbReference>
<dbReference type="GO" id="GO:0071300">
    <property type="term" value="P:cellular response to retinoic acid"/>
    <property type="evidence" value="ECO:0000318"/>
    <property type="project" value="GO_Central"/>
</dbReference>
<dbReference type="GO" id="GO:0021954">
    <property type="term" value="P:central nervous system neuron development"/>
    <property type="evidence" value="ECO:0007669"/>
    <property type="project" value="Ensembl"/>
</dbReference>
<dbReference type="GO" id="GO:0021953">
    <property type="term" value="P:central nervous system neuron differentiation"/>
    <property type="evidence" value="ECO:0000318"/>
    <property type="project" value="GO_Central"/>
</dbReference>
<dbReference type="GO" id="GO:0035640">
    <property type="term" value="P:exploration behavior"/>
    <property type="evidence" value="ECO:0007669"/>
    <property type="project" value="Ensembl"/>
</dbReference>
<dbReference type="GO" id="GO:0010467">
    <property type="term" value="P:gene expression"/>
    <property type="evidence" value="ECO:0007669"/>
    <property type="project" value="Ensembl"/>
</dbReference>
<dbReference type="GO" id="GO:0048873">
    <property type="term" value="P:homeostasis of number of cells within a tissue"/>
    <property type="evidence" value="ECO:0007669"/>
    <property type="project" value="Ensembl"/>
</dbReference>
<dbReference type="GO" id="GO:0042711">
    <property type="term" value="P:maternal behavior"/>
    <property type="evidence" value="ECO:0007669"/>
    <property type="project" value="Ensembl"/>
</dbReference>
<dbReference type="GO" id="GO:0045930">
    <property type="term" value="P:negative regulation of mitotic cell cycle"/>
    <property type="evidence" value="ECO:0000318"/>
    <property type="project" value="GO_Central"/>
</dbReference>
<dbReference type="GO" id="GO:0050768">
    <property type="term" value="P:negative regulation of neurogenesis"/>
    <property type="evidence" value="ECO:0007669"/>
    <property type="project" value="Ensembl"/>
</dbReference>
<dbReference type="GO" id="GO:0045666">
    <property type="term" value="P:positive regulation of neuron differentiation"/>
    <property type="evidence" value="ECO:0007669"/>
    <property type="project" value="InterPro"/>
</dbReference>
<dbReference type="GO" id="GO:0010498">
    <property type="term" value="P:proteasomal protein catabolic process"/>
    <property type="evidence" value="ECO:0007669"/>
    <property type="project" value="Ensembl"/>
</dbReference>
<dbReference type="GO" id="GO:0050821">
    <property type="term" value="P:protein stabilization"/>
    <property type="evidence" value="ECO:0007669"/>
    <property type="project" value="Ensembl"/>
</dbReference>
<dbReference type="GO" id="GO:0007614">
    <property type="term" value="P:short-term memory"/>
    <property type="evidence" value="ECO:0007669"/>
    <property type="project" value="Ensembl"/>
</dbReference>
<dbReference type="GO" id="GO:0035176">
    <property type="term" value="P:social behavior"/>
    <property type="evidence" value="ECO:0007669"/>
    <property type="project" value="Ensembl"/>
</dbReference>
<dbReference type="GO" id="GO:0071625">
    <property type="term" value="P:vocalization behavior"/>
    <property type="evidence" value="ECO:0007669"/>
    <property type="project" value="Ensembl"/>
</dbReference>
<dbReference type="InterPro" id="IPR033237">
    <property type="entry name" value="BRINP"/>
</dbReference>
<dbReference type="InterPro" id="IPR020864">
    <property type="entry name" value="MACPF"/>
</dbReference>
<dbReference type="PANTHER" id="PTHR15564:SF7">
    <property type="entry name" value="BMP_RETINOIC ACID-INDUCIBLE NEURAL-SPECIFIC PROTEIN 1"/>
    <property type="match status" value="1"/>
</dbReference>
<dbReference type="PANTHER" id="PTHR15564">
    <property type="entry name" value="MACPF DOMAIN-CONTAINING PROTEIN"/>
    <property type="match status" value="1"/>
</dbReference>
<dbReference type="Pfam" id="PF19052">
    <property type="entry name" value="BRINP"/>
    <property type="match status" value="1"/>
</dbReference>
<dbReference type="Pfam" id="PF25415">
    <property type="entry name" value="EGF_BRNP1-3"/>
    <property type="match status" value="1"/>
</dbReference>
<dbReference type="Pfam" id="PF01823">
    <property type="entry name" value="MACPF"/>
    <property type="match status" value="1"/>
</dbReference>
<dbReference type="SMART" id="SM00457">
    <property type="entry name" value="MACPF"/>
    <property type="match status" value="1"/>
</dbReference>